<name>TR150_HUMAN</name>
<sequence length="955" mass="108666">MSKTNKSKSGSRSSRSRSASRSRSRSFSKSRSRSRSLSRSRKRRLSSRSRSRSYSPAHNRERNHPRVYQNRDFRGHNRGYRRPYYFRGRNRGFYPWGQYNRGGYGNYRSNWQNYRQAYSPRRGRSRSRSPKRRSPSPRSRSHSRNSDKSSSDRSRRSSSSRSSSNHSRVESSKRKSAKEKKSSSKDSRPSQAAGDNQGDEAKEQTFSGGTSQDTKASESSKPWPDATYGTGSASRASAVSELSPRERSPALKSPLQSVVVRRRSPRPSPVPKPSPPLSSTSQMGSTLPSGAGYQSGTHQGQFDHGSGSLSPSKKSPVGKSPPSTGSTYGSSQKEESAASGGAAYTKRYLEEQKTENGKDKEQKQTNTDKEKIKEKGSFSDTGLGDGKMKSDSFAPKTDSEKPFRGSQSPKRYKLRDDFEKKMADFHKEEMDDQDKDKAKGRKESEFDDEPKFMSKVIGANKNQEEEKSGKWEGLVYAPPGKEKQRKTEELEEESFPERSKKEDRGKRSEGGHRGFVPEKNFRVTAYKAVQEKSSSPPPRKTSESRDKLGAKGDFPTGKSSFSITREAQVNVRMDSFDEDLARPSGLLAQERKLCRDLVHSNKKEQEFRSIFQHIQSAQSQRSPSELFAQHIVTIVHHVKEHHFGSSGMTLHERFTKYLKRGTEQEAAKNKKSPEIHRRIDISPSTFRKHGLAHDEMKSPREPGYKAEGKYKDDPVDLRLDIERRKKHKERDLKRGKSRESVDSRDSSHSRERSAEKTEKTHKGSKKQKKHRRARDRSRSSSSSSQSSHSYKAEEYTEETEEREESTTGFDKSRLGTKDFVGPSERGGGRARGTFQFRARGRGWGRGNYSGNNNNNSNNDFQKRNREEEWDPEYTPKSKKYYLHDDREGEGSDKWVSRGRGRGAFPRGRGRFMFRKSSTSPKWAHDKFSGEEGEIEDDESGTENREEKDNIQPTTE</sequence>
<accession>Q9Y2W1</accession>
<accession>D3DPS5</accession>
<accession>Q5VTK6</accession>
<organism>
    <name type="scientific">Homo sapiens</name>
    <name type="common">Human</name>
    <dbReference type="NCBI Taxonomy" id="9606"/>
    <lineage>
        <taxon>Eukaryota</taxon>
        <taxon>Metazoa</taxon>
        <taxon>Chordata</taxon>
        <taxon>Craniata</taxon>
        <taxon>Vertebrata</taxon>
        <taxon>Euteleostomi</taxon>
        <taxon>Mammalia</taxon>
        <taxon>Eutheria</taxon>
        <taxon>Euarchontoglires</taxon>
        <taxon>Primates</taxon>
        <taxon>Haplorrhini</taxon>
        <taxon>Catarrhini</taxon>
        <taxon>Hominidae</taxon>
        <taxon>Homo</taxon>
    </lineage>
</organism>
<feature type="initiator methionine" description="Removed" evidence="29">
    <location>
        <position position="1"/>
    </location>
</feature>
<feature type="chain" id="PRO_0000065583" description="Thyroid hormone receptor-associated protein 3">
    <location>
        <begin position="2"/>
        <end position="955"/>
    </location>
</feature>
<feature type="region of interest" description="Disordered" evidence="3">
    <location>
        <begin position="1"/>
        <end position="94"/>
    </location>
</feature>
<feature type="region of interest" description="Required for mRNA splicing activation">
    <location>
        <begin position="2"/>
        <end position="190"/>
    </location>
</feature>
<feature type="region of interest" description="Disordered" evidence="3">
    <location>
        <begin position="117"/>
        <end position="559"/>
    </location>
</feature>
<feature type="region of interest" description="Required for mRNA decay activity">
    <location>
        <begin position="359"/>
        <end position="955"/>
    </location>
</feature>
<feature type="region of interest" description="Disordered" evidence="3">
    <location>
        <begin position="663"/>
        <end position="955"/>
    </location>
</feature>
<feature type="compositionally biased region" description="Basic residues" evidence="3">
    <location>
        <begin position="14"/>
        <end position="51"/>
    </location>
</feature>
<feature type="compositionally biased region" description="Basic and acidic residues" evidence="3">
    <location>
        <begin position="58"/>
        <end position="75"/>
    </location>
</feature>
<feature type="compositionally biased region" description="Low complexity" evidence="3">
    <location>
        <begin position="82"/>
        <end position="94"/>
    </location>
</feature>
<feature type="compositionally biased region" description="Basic residues" evidence="3">
    <location>
        <begin position="121"/>
        <end position="143"/>
    </location>
</feature>
<feature type="compositionally biased region" description="Basic and acidic residues" evidence="3">
    <location>
        <begin position="144"/>
        <end position="155"/>
    </location>
</feature>
<feature type="compositionally biased region" description="Low complexity" evidence="3">
    <location>
        <begin position="157"/>
        <end position="166"/>
    </location>
</feature>
<feature type="compositionally biased region" description="Basic and acidic residues" evidence="3">
    <location>
        <begin position="167"/>
        <end position="188"/>
    </location>
</feature>
<feature type="compositionally biased region" description="Polar residues" evidence="3">
    <location>
        <begin position="204"/>
        <end position="220"/>
    </location>
</feature>
<feature type="compositionally biased region" description="Pro residues" evidence="3">
    <location>
        <begin position="266"/>
        <end position="276"/>
    </location>
</feature>
<feature type="compositionally biased region" description="Polar residues" evidence="3">
    <location>
        <begin position="282"/>
        <end position="300"/>
    </location>
</feature>
<feature type="compositionally biased region" description="Low complexity" evidence="3">
    <location>
        <begin position="305"/>
        <end position="331"/>
    </location>
</feature>
<feature type="compositionally biased region" description="Basic and acidic residues" evidence="3">
    <location>
        <begin position="347"/>
        <end position="377"/>
    </location>
</feature>
<feature type="compositionally biased region" description="Basic and acidic residues" evidence="3">
    <location>
        <begin position="414"/>
        <end position="452"/>
    </location>
</feature>
<feature type="compositionally biased region" description="Basic and acidic residues" evidence="3">
    <location>
        <begin position="495"/>
        <end position="521"/>
    </location>
</feature>
<feature type="compositionally biased region" description="Basic and acidic residues" evidence="3">
    <location>
        <begin position="540"/>
        <end position="550"/>
    </location>
</feature>
<feature type="compositionally biased region" description="Basic and acidic residues" evidence="3">
    <location>
        <begin position="663"/>
        <end position="680"/>
    </location>
</feature>
<feature type="compositionally biased region" description="Basic and acidic residues" evidence="3">
    <location>
        <begin position="691"/>
        <end position="761"/>
    </location>
</feature>
<feature type="compositionally biased region" description="Basic residues" evidence="3">
    <location>
        <begin position="762"/>
        <end position="775"/>
    </location>
</feature>
<feature type="compositionally biased region" description="Low complexity" evidence="3">
    <location>
        <begin position="779"/>
        <end position="789"/>
    </location>
</feature>
<feature type="compositionally biased region" description="Low complexity" evidence="3">
    <location>
        <begin position="848"/>
        <end position="859"/>
    </location>
</feature>
<feature type="compositionally biased region" description="Basic and acidic residues" evidence="3">
    <location>
        <begin position="881"/>
        <end position="895"/>
    </location>
</feature>
<feature type="compositionally biased region" description="Acidic residues" evidence="3">
    <location>
        <begin position="930"/>
        <end position="940"/>
    </location>
</feature>
<feature type="binding site" evidence="2">
    <location>
        <begin position="552"/>
        <end position="559"/>
    </location>
    <ligand>
        <name>ATP</name>
        <dbReference type="ChEBI" id="CHEBI:30616"/>
    </ligand>
</feature>
<feature type="modified residue" description="N-acetylserine" evidence="29">
    <location>
        <position position="2"/>
    </location>
</feature>
<feature type="modified residue" description="Dimethylated arginine" evidence="15">
    <location>
        <position position="17"/>
    </location>
</feature>
<feature type="modified residue" description="Asymmetric dimethylarginine" evidence="31">
    <location>
        <position position="66"/>
    </location>
</feature>
<feature type="modified residue" description="Asymmetric dimethylarginine" evidence="31">
    <location>
        <position position="101"/>
    </location>
</feature>
<feature type="modified residue" description="Asymmetric dimethylarginine" evidence="31">
    <location>
        <position position="108"/>
    </location>
</feature>
<feature type="modified residue" description="Phosphoserine" evidence="30">
    <location>
        <position position="220"/>
    </location>
</feature>
<feature type="modified residue" description="N6-acetyllysine; alternate" evidence="25">
    <location>
        <position position="221"/>
    </location>
</feature>
<feature type="modified residue" description="Phosphoserine" evidence="22 27 30">
    <location>
        <position position="232"/>
    </location>
</feature>
<feature type="modified residue" description="Phosphoserine" evidence="22 30">
    <location>
        <position position="237"/>
    </location>
</feature>
<feature type="modified residue" description="Phosphoserine" evidence="19 22 30">
    <location>
        <position position="240"/>
    </location>
</feature>
<feature type="modified residue" description="Phosphoserine" evidence="15 18 19 20 22 23 24 27 28 30">
    <location>
        <position position="243"/>
    </location>
</feature>
<feature type="modified residue" description="Phosphoserine" evidence="19 20 22 27 30 32">
    <location>
        <position position="248"/>
    </location>
</feature>
<feature type="modified residue" description="N6-methyllysine; alternate" evidence="31">
    <location>
        <position position="252"/>
    </location>
</feature>
<feature type="modified residue" description="Phosphoserine" evidence="19 20 22 27 28 30 32">
    <location>
        <position position="253"/>
    </location>
</feature>
<feature type="modified residue" description="Phosphoserine" evidence="27 30 32">
    <location>
        <position position="257"/>
    </location>
</feature>
<feature type="modified residue" description="Phosphoserine" evidence="19 27 28 30">
    <location>
        <position position="315"/>
    </location>
</feature>
<feature type="modified residue" description="Phosphoserine" evidence="15 19 27 28 30 32">
    <location>
        <position position="320"/>
    </location>
</feature>
<feature type="modified residue" description="Phosphoserine" evidence="30">
    <location>
        <position position="323"/>
    </location>
</feature>
<feature type="modified residue" description="Phosphothreonine" evidence="1">
    <location>
        <position position="324"/>
    </location>
</feature>
<feature type="modified residue" description="Phosphoserine" evidence="30">
    <location>
        <position position="326"/>
    </location>
</feature>
<feature type="modified residue" description="Phosphotyrosine" evidence="1">
    <location>
        <position position="328"/>
    </location>
</feature>
<feature type="modified residue" description="Phosphoserine" evidence="28">
    <location>
        <position position="339"/>
    </location>
</feature>
<feature type="modified residue" description="N6-acetyllysine; alternate" evidence="1">
    <location>
        <position position="346"/>
    </location>
</feature>
<feature type="modified residue" description="Phosphoserine" evidence="30 32">
    <location>
        <position position="377"/>
    </location>
</feature>
<feature type="modified residue" description="Phosphoserine" evidence="22 27 28 30">
    <location>
        <position position="379"/>
    </location>
</feature>
<feature type="modified residue" description="Phosphothreonine" evidence="30">
    <location>
        <position position="397"/>
    </location>
</feature>
<feature type="modified residue" description="Phosphoserine" evidence="22 28 30">
    <location>
        <position position="406"/>
    </location>
</feature>
<feature type="modified residue" description="Phosphoserine" evidence="22 27 28 30">
    <location>
        <position position="408"/>
    </location>
</feature>
<feature type="modified residue" description="Phosphoserine" evidence="30">
    <location>
        <position position="444"/>
    </location>
</feature>
<feature type="modified residue" description="N6-acetyllysine; alternate" evidence="25">
    <location>
        <position position="455"/>
    </location>
</feature>
<feature type="modified residue" description="Phosphoserine" evidence="30">
    <location>
        <position position="468"/>
    </location>
</feature>
<feature type="modified residue" description="N6-acetyllysine; alternate" evidence="1">
    <location>
        <position position="470"/>
    </location>
</feature>
<feature type="modified residue" description="N6-acetyllysine; alternate" evidence="1">
    <location>
        <position position="481"/>
    </location>
</feature>
<feature type="modified residue" description="N6-acetyllysine" evidence="25">
    <location>
        <position position="519"/>
    </location>
</feature>
<feature type="modified residue" description="N6-acetyllysine; alternate" evidence="1">
    <location>
        <position position="527"/>
    </location>
</feature>
<feature type="modified residue" description="Phosphoserine" evidence="28">
    <location>
        <position position="535"/>
    </location>
</feature>
<feature type="modified residue" description="N6-acetyllysine; alternate" evidence="1">
    <location>
        <position position="558"/>
    </location>
</feature>
<feature type="modified residue" description="Phosphoserine" evidence="30 32">
    <location>
        <position position="560"/>
    </location>
</feature>
<feature type="modified residue" description="Phosphoserine" evidence="30">
    <location>
        <position position="562"/>
    </location>
</feature>
<feature type="modified residue" description="Phosphoserine" evidence="19 22 27 28 30 32">
    <location>
        <position position="575"/>
    </location>
</feature>
<feature type="modified residue" description="Phosphoserine" evidence="30">
    <location>
        <position position="619"/>
    </location>
</feature>
<feature type="modified residue" description="Phosphoserine" evidence="27 28">
    <location>
        <position position="622"/>
    </location>
</feature>
<feature type="modified residue" description="Phosphoserine" evidence="19">
    <location>
        <position position="672"/>
    </location>
</feature>
<feature type="modified residue" description="Phosphoserine" evidence="15 22 27 28 30 32">
    <location>
        <position position="682"/>
    </location>
</feature>
<feature type="modified residue" description="Phosphoserine" evidence="32">
    <location>
        <position position="684"/>
    </location>
</feature>
<feature type="modified residue" description="Phosphoserine" evidence="27 28 30">
    <location>
        <position position="698"/>
    </location>
</feature>
<feature type="modified residue" description="N6-acetyllysine" evidence="25">
    <location>
        <position position="811"/>
    </location>
</feature>
<feature type="modified residue" description="Asymmetric dimethylarginine" evidence="1">
    <location>
        <position position="845"/>
    </location>
</feature>
<feature type="modified residue" description="Phosphothreonine" evidence="22 26 30">
    <location>
        <position position="874"/>
    </location>
</feature>
<feature type="modified residue" description="Phosphoserine" evidence="19 21 22 26 27 28 30">
    <location>
        <position position="928"/>
    </location>
</feature>
<feature type="modified residue" description="Phosphoserine" evidence="22 26 27 28 30">
    <location>
        <position position="939"/>
    </location>
</feature>
<feature type="cross-link" description="Glycyl lysine isopeptide (Lys-Gly) (interchain with G-Cter in SUMO1); alternate" evidence="33">
    <location>
        <position position="202"/>
    </location>
</feature>
<feature type="cross-link" description="Glycyl lysine isopeptide (Lys-Gly) (interchain with G-Cter in SUMO2); alternate" evidence="37">
    <location>
        <position position="202"/>
    </location>
</feature>
<feature type="cross-link" description="Glycyl lysine isopeptide (Lys-Gly) (interchain with G-Cter in SUMO2)" evidence="37">
    <location>
        <position position="215"/>
    </location>
</feature>
<feature type="cross-link" description="Glycyl lysine isopeptide (Lys-Gly) (interchain with G-Cter in SUMO2); alternate" evidence="37">
    <location>
        <position position="221"/>
    </location>
</feature>
<feature type="cross-link" description="Glycyl lysine isopeptide (Lys-Gly) (interchain with G-Cter in SUMO2); alternate" evidence="37">
    <location>
        <position position="252"/>
    </location>
</feature>
<feature type="cross-link" description="Glycyl lysine isopeptide (Lys-Gly) (interchain with G-Cter in SUMO2)" evidence="37">
    <location>
        <position position="333"/>
    </location>
</feature>
<feature type="cross-link" description="Glycyl lysine isopeptide (Lys-Gly) (interchain with G-Cter in SUMO2); alternate" evidence="37">
    <location>
        <position position="346"/>
    </location>
</feature>
<feature type="cross-link" description="Glycyl lysine isopeptide (Lys-Gly) (interchain with G-Cter in SUMO2)" evidence="37">
    <location>
        <position position="353"/>
    </location>
</feature>
<feature type="cross-link" description="Glycyl lysine isopeptide (Lys-Gly) (interchain with G-Cter in SUMO2)" evidence="37">
    <location>
        <position position="375"/>
    </location>
</feature>
<feature type="cross-link" description="Glycyl lysine isopeptide (Lys-Gly) (interchain with G-Cter in SUMO1); alternate" evidence="33">
    <location>
        <position position="387"/>
    </location>
</feature>
<feature type="cross-link" description="Glycyl lysine isopeptide (Lys-Gly) (interchain with G-Cter in SUMO2); alternate" evidence="37">
    <location>
        <position position="387"/>
    </location>
</feature>
<feature type="cross-link" description="Glycyl lysine isopeptide (Lys-Gly) (interchain with G-Cter in SUMO2)" evidence="37">
    <location>
        <position position="389"/>
    </location>
</feature>
<feature type="cross-link" description="Glycyl lysine isopeptide (Lys-Gly) (interchain with G-Cter in SUMO2)" evidence="35 37">
    <location>
        <position position="396"/>
    </location>
</feature>
<feature type="cross-link" description="Glycyl lysine isopeptide (Lys-Gly) (interchain with G-Cter in SUMO2)" evidence="37">
    <location>
        <position position="401"/>
    </location>
</feature>
<feature type="cross-link" description="Glycyl lysine isopeptide (Lys-Gly) (interchain with G-Cter in SUMO2)" evidence="37">
    <location>
        <position position="421"/>
    </location>
</feature>
<feature type="cross-link" description="Glycyl lysine isopeptide (Lys-Gly) (interchain with G-Cter in SUMO2)" evidence="35 37">
    <location>
        <position position="427"/>
    </location>
</feature>
<feature type="cross-link" description="Glycyl lysine isopeptide (Lys-Gly) (interchain with G-Cter in SUMO1); alternate" evidence="33">
    <location>
        <position position="451"/>
    </location>
</feature>
<feature type="cross-link" description="Glycyl lysine isopeptide (Lys-Gly) (interchain with G-Cter in SUMO2); alternate" evidence="33 34 35 37">
    <location>
        <position position="451"/>
    </location>
</feature>
<feature type="cross-link" description="Glycyl lysine isopeptide (Lys-Gly) (interchain with G-Cter in SUMO2); alternate" evidence="37">
    <location>
        <position position="455"/>
    </location>
</feature>
<feature type="cross-link" description="Glycyl lysine isopeptide (Lys-Gly) (interchain with G-Cter in SUMO2)" evidence="37">
    <location>
        <position position="461"/>
    </location>
</feature>
<feature type="cross-link" description="Glycyl lysine isopeptide (Lys-Gly) (interchain with G-Cter in SUMO2)" evidence="34 37">
    <location>
        <position position="467"/>
    </location>
</feature>
<feature type="cross-link" description="Glycyl lysine isopeptide (Lys-Gly) (interchain with G-Cter in SUMO2); alternate" evidence="34 35 37">
    <location>
        <position position="470"/>
    </location>
</feature>
<feature type="cross-link" description="Glycyl lysine isopeptide (Lys-Gly) (interchain with G-Cter in SUMO2); alternate" evidence="37">
    <location>
        <position position="481"/>
    </location>
</feature>
<feature type="cross-link" description="Glycyl lysine isopeptide (Lys-Gly) (interchain with G-Cter in SUMO2)" evidence="34 35 36 37">
    <location>
        <position position="486"/>
    </location>
</feature>
<feature type="cross-link" description="Glycyl lysine isopeptide (Lys-Gly) (interchain with G-Cter in SUMO2); alternate" evidence="35 37">
    <location>
        <position position="527"/>
    </location>
</feature>
<feature type="cross-link" description="Glycyl lysine isopeptide (Lys-Gly) (interchain with G-Cter in SUMO2)" evidence="37">
    <location>
        <position position="551"/>
    </location>
</feature>
<feature type="cross-link" description="Glycyl lysine isopeptide (Lys-Gly) (interchain with G-Cter in SUMO2); alternate" evidence="37">
    <location>
        <position position="558"/>
    </location>
</feature>
<feature type="cross-link" description="Glycyl lysine isopeptide (Lys-Gly) (interchain with G-Cter in SUMO2)" evidence="37">
    <location>
        <position position="602"/>
    </location>
</feature>
<feature type="cross-link" description="Glycyl lysine isopeptide (Lys-Gly) (interchain with G-Cter in SUMO2)" evidence="35 37">
    <location>
        <position position="697"/>
    </location>
</feature>
<feature type="cross-link" description="Glycyl lysine isopeptide (Lys-Gly) (interchain with G-Cter in SUMO2)" evidence="34 35 37">
    <location>
        <position position="705"/>
    </location>
</feature>
<feature type="cross-link" description="Glycyl lysine isopeptide (Lys-Gly) (interchain with G-Cter in SUMO2)" evidence="37">
    <location>
        <position position="709"/>
    </location>
</feature>
<feature type="cross-link" description="Glycyl lysine isopeptide (Lys-Gly) (interchain with G-Cter in SUMO2)" evidence="34 35 37">
    <location>
        <position position="711"/>
    </location>
</feature>
<feature type="cross-link" description="Glycyl lysine isopeptide (Lys-Gly) (interchain with G-Cter in SUMO2)" evidence="34">
    <location>
        <position position="756"/>
    </location>
</feature>
<feature type="cross-link" description="Glycyl lysine isopeptide (Lys-Gly) (interchain with G-Cter in SUMO2)" evidence="34">
    <location>
        <position position="759"/>
    </location>
</feature>
<feature type="cross-link" description="Glycyl lysine isopeptide (Lys-Gly) (interchain with G-Cter in SUMO2)" evidence="37">
    <location>
        <position position="876"/>
    </location>
</feature>
<feature type="cross-link" description="Glycyl lysine isopeptide (Lys-Gly) (interchain with G-Cter in SUMO2)" evidence="37">
    <location>
        <position position="879"/>
    </location>
</feature>
<feature type="sequence variant" id="VAR_024552" description="In dbSNP:rs6425977." evidence="4 5 14">
    <original>A</original>
    <variation>V</variation>
    <location>
        <position position="201"/>
    </location>
</feature>
<feature type="mutagenesis site" description="Reduces phosphorylation upon DNA damage; when associated with A-408." evidence="10">
    <original>S</original>
    <variation>A</variation>
    <location>
        <position position="406"/>
    </location>
</feature>
<feature type="mutagenesis site" description="Reduces phosphorylation upon DNA damage; when associated with A-406." evidence="10">
    <original>S</original>
    <variation>A</variation>
    <location>
        <position position="408"/>
    </location>
</feature>
<protein>
    <recommendedName>
        <fullName>Thyroid hormone receptor-associated protein 3</fullName>
    </recommendedName>
    <alternativeName>
        <fullName evidence="17">BCLAF1 and THRAP3 family member 2</fullName>
    </alternativeName>
    <alternativeName>
        <fullName>Thyroid hormone receptor-associated protein complex 150 kDa component</fullName>
        <shortName>Trap150</shortName>
    </alternativeName>
</protein>
<reference key="1">
    <citation type="journal article" date="1999" name="Mol. Cell">
        <title>Identity between TRAP and SMCC complexes indicates novel pathways for the function of nuclear receptors and diverse mammalian activators.</title>
        <authorList>
            <person name="Ito M."/>
            <person name="Yuan C.-X."/>
            <person name="Malik S."/>
            <person name="Gu W."/>
            <person name="Fondell J.D."/>
            <person name="Yamamura S."/>
            <person name="Fu Z.-Y."/>
            <person name="Zhang X."/>
            <person name="Qin J."/>
            <person name="Roeder R.G."/>
        </authorList>
    </citation>
    <scope>NUCLEOTIDE SEQUENCE [MRNA]</scope>
    <scope>PROTEIN SEQUENCE OF 490-500</scope>
    <scope>TISSUE SPECIFICITY</scope>
    <scope>IDENTIFICATION IN TRAP COMPLEX</scope>
    <scope>VARIANT VAL-201</scope>
    <source>
        <tissue>Cervix carcinoma</tissue>
    </source>
</reference>
<reference key="2">
    <citation type="journal article" date="2006" name="Nature">
        <title>The DNA sequence and biological annotation of human chromosome 1.</title>
        <authorList>
            <person name="Gregory S.G."/>
            <person name="Barlow K.F."/>
            <person name="McLay K.E."/>
            <person name="Kaul R."/>
            <person name="Swarbreck D."/>
            <person name="Dunham A."/>
            <person name="Scott C.E."/>
            <person name="Howe K.L."/>
            <person name="Woodfine K."/>
            <person name="Spencer C.C.A."/>
            <person name="Jones M.C."/>
            <person name="Gillson C."/>
            <person name="Searle S."/>
            <person name="Zhou Y."/>
            <person name="Kokocinski F."/>
            <person name="McDonald L."/>
            <person name="Evans R."/>
            <person name="Phillips K."/>
            <person name="Atkinson A."/>
            <person name="Cooper R."/>
            <person name="Jones C."/>
            <person name="Hall R.E."/>
            <person name="Andrews T.D."/>
            <person name="Lloyd C."/>
            <person name="Ainscough R."/>
            <person name="Almeida J.P."/>
            <person name="Ambrose K.D."/>
            <person name="Anderson F."/>
            <person name="Andrew R.W."/>
            <person name="Ashwell R.I.S."/>
            <person name="Aubin K."/>
            <person name="Babbage A.K."/>
            <person name="Bagguley C.L."/>
            <person name="Bailey J."/>
            <person name="Beasley H."/>
            <person name="Bethel G."/>
            <person name="Bird C.P."/>
            <person name="Bray-Allen S."/>
            <person name="Brown J.Y."/>
            <person name="Brown A.J."/>
            <person name="Buckley D."/>
            <person name="Burton J."/>
            <person name="Bye J."/>
            <person name="Carder C."/>
            <person name="Chapman J.C."/>
            <person name="Clark S.Y."/>
            <person name="Clarke G."/>
            <person name="Clee C."/>
            <person name="Cobley V."/>
            <person name="Collier R.E."/>
            <person name="Corby N."/>
            <person name="Coville G.J."/>
            <person name="Davies J."/>
            <person name="Deadman R."/>
            <person name="Dunn M."/>
            <person name="Earthrowl M."/>
            <person name="Ellington A.G."/>
            <person name="Errington H."/>
            <person name="Frankish A."/>
            <person name="Frankland J."/>
            <person name="French L."/>
            <person name="Garner P."/>
            <person name="Garnett J."/>
            <person name="Gay L."/>
            <person name="Ghori M.R.J."/>
            <person name="Gibson R."/>
            <person name="Gilby L.M."/>
            <person name="Gillett W."/>
            <person name="Glithero R.J."/>
            <person name="Grafham D.V."/>
            <person name="Griffiths C."/>
            <person name="Griffiths-Jones S."/>
            <person name="Grocock R."/>
            <person name="Hammond S."/>
            <person name="Harrison E.S.I."/>
            <person name="Hart E."/>
            <person name="Haugen E."/>
            <person name="Heath P.D."/>
            <person name="Holmes S."/>
            <person name="Holt K."/>
            <person name="Howden P.J."/>
            <person name="Hunt A.R."/>
            <person name="Hunt S.E."/>
            <person name="Hunter G."/>
            <person name="Isherwood J."/>
            <person name="James R."/>
            <person name="Johnson C."/>
            <person name="Johnson D."/>
            <person name="Joy A."/>
            <person name="Kay M."/>
            <person name="Kershaw J.K."/>
            <person name="Kibukawa M."/>
            <person name="Kimberley A.M."/>
            <person name="King A."/>
            <person name="Knights A.J."/>
            <person name="Lad H."/>
            <person name="Laird G."/>
            <person name="Lawlor S."/>
            <person name="Leongamornlert D.A."/>
            <person name="Lloyd D.M."/>
            <person name="Loveland J."/>
            <person name="Lovell J."/>
            <person name="Lush M.J."/>
            <person name="Lyne R."/>
            <person name="Martin S."/>
            <person name="Mashreghi-Mohammadi M."/>
            <person name="Matthews L."/>
            <person name="Matthews N.S.W."/>
            <person name="McLaren S."/>
            <person name="Milne S."/>
            <person name="Mistry S."/>
            <person name="Moore M.J.F."/>
            <person name="Nickerson T."/>
            <person name="O'Dell C.N."/>
            <person name="Oliver K."/>
            <person name="Palmeiri A."/>
            <person name="Palmer S.A."/>
            <person name="Parker A."/>
            <person name="Patel D."/>
            <person name="Pearce A.V."/>
            <person name="Peck A.I."/>
            <person name="Pelan S."/>
            <person name="Phelps K."/>
            <person name="Phillimore B.J."/>
            <person name="Plumb R."/>
            <person name="Rajan J."/>
            <person name="Raymond C."/>
            <person name="Rouse G."/>
            <person name="Saenphimmachak C."/>
            <person name="Sehra H.K."/>
            <person name="Sheridan E."/>
            <person name="Shownkeen R."/>
            <person name="Sims S."/>
            <person name="Skuce C.D."/>
            <person name="Smith M."/>
            <person name="Steward C."/>
            <person name="Subramanian S."/>
            <person name="Sycamore N."/>
            <person name="Tracey A."/>
            <person name="Tromans A."/>
            <person name="Van Helmond Z."/>
            <person name="Wall M."/>
            <person name="Wallis J.M."/>
            <person name="White S."/>
            <person name="Whitehead S.L."/>
            <person name="Wilkinson J.E."/>
            <person name="Willey D.L."/>
            <person name="Williams H."/>
            <person name="Wilming L."/>
            <person name="Wray P.W."/>
            <person name="Wu Z."/>
            <person name="Coulson A."/>
            <person name="Vaudin M."/>
            <person name="Sulston J.E."/>
            <person name="Durbin R.M."/>
            <person name="Hubbard T."/>
            <person name="Wooster R."/>
            <person name="Dunham I."/>
            <person name="Carter N.P."/>
            <person name="McVean G."/>
            <person name="Ross M.T."/>
            <person name="Harrow J."/>
            <person name="Olson M.V."/>
            <person name="Beck S."/>
            <person name="Rogers J."/>
            <person name="Bentley D.R."/>
        </authorList>
    </citation>
    <scope>NUCLEOTIDE SEQUENCE [LARGE SCALE GENOMIC DNA]</scope>
</reference>
<reference key="3">
    <citation type="submission" date="2005-09" db="EMBL/GenBank/DDBJ databases">
        <authorList>
            <person name="Mural R.J."/>
            <person name="Istrail S."/>
            <person name="Sutton G.G."/>
            <person name="Florea L."/>
            <person name="Halpern A.L."/>
            <person name="Mobarry C.M."/>
            <person name="Lippert R."/>
            <person name="Walenz B."/>
            <person name="Shatkay H."/>
            <person name="Dew I."/>
            <person name="Miller J.R."/>
            <person name="Flanigan M.J."/>
            <person name="Edwards N.J."/>
            <person name="Bolanos R."/>
            <person name="Fasulo D."/>
            <person name="Halldorsson B.V."/>
            <person name="Hannenhalli S."/>
            <person name="Turner R."/>
            <person name="Yooseph S."/>
            <person name="Lu F."/>
            <person name="Nusskern D.R."/>
            <person name="Shue B.C."/>
            <person name="Zheng X.H."/>
            <person name="Zhong F."/>
            <person name="Delcher A.L."/>
            <person name="Huson D.H."/>
            <person name="Kravitz S.A."/>
            <person name="Mouchard L."/>
            <person name="Reinert K."/>
            <person name="Remington K.A."/>
            <person name="Clark A.G."/>
            <person name="Waterman M.S."/>
            <person name="Eichler E.E."/>
            <person name="Adams M.D."/>
            <person name="Hunkapiller M.W."/>
            <person name="Myers E.W."/>
            <person name="Venter J.C."/>
        </authorList>
    </citation>
    <scope>NUCLEOTIDE SEQUENCE [LARGE SCALE GENOMIC DNA]</scope>
    <scope>VARIANT VAL-201</scope>
</reference>
<reference key="4">
    <citation type="journal article" date="2004" name="Genome Res.">
        <title>The status, quality, and expansion of the NIH full-length cDNA project: the Mammalian Gene Collection (MGC).</title>
        <authorList>
            <consortium name="The MGC Project Team"/>
        </authorList>
    </citation>
    <scope>NUCLEOTIDE SEQUENCE [LARGE SCALE MRNA]</scope>
    <scope>VARIANT VAL-201</scope>
    <source>
        <tissue>Brain</tissue>
    </source>
</reference>
<reference key="5">
    <citation type="submission" date="2008-12" db="UniProtKB">
        <authorList>
            <person name="Bienvenut W.V."/>
            <person name="Heiserich L."/>
            <person name="Boulahbel H."/>
            <person name="Gottlieb E."/>
            <person name="Lilla S."/>
            <person name="von Kriegsheim A."/>
            <person name="Lempens A."/>
            <person name="Kolch W."/>
        </authorList>
    </citation>
    <scope>PROTEIN SEQUENCE OF 186-202; 216-245; 253-261; 314-333; 376-387; 443-451; 468-481; 486-498; 573-591; 609-653; 678-687; 710-718; 792-802; 864-876; 879-893 AND 927-944</scope>
    <scope>METHYLATION AT ARG-17</scope>
    <scope>PHOSPHORYLATION AT SER-243; SER-320 AND SER-682</scope>
    <scope>IDENTIFICATION BY MASS SPECTROMETRY</scope>
    <source>
        <tissue>Colon carcinoma</tissue>
        <tissue>Ovarian carcinoma</tissue>
    </source>
</reference>
<reference key="6">
    <citation type="journal article" date="2003" name="Nature">
        <title>Proteomic characterization of the human centrosome by protein correlation profiling.</title>
        <authorList>
            <person name="Andersen J.S."/>
            <person name="Wilkinson C.J."/>
            <person name="Mayor T."/>
            <person name="Mortensen P."/>
            <person name="Nigg E.A."/>
            <person name="Mann M."/>
        </authorList>
    </citation>
    <scope>IDENTIFICATION BY MASS SPECTROMETRY</scope>
    <source>
        <tissue>Lymphoblast</tissue>
    </source>
</reference>
<reference key="7">
    <citation type="journal article" date="2004" name="Anal. Chem.">
        <title>Robust phosphoproteomic profiling of tyrosine phosphorylation sites from human T cells using immobilized metal affinity chromatography and tandem mass spectrometry.</title>
        <authorList>
            <person name="Brill L.M."/>
            <person name="Salomon A.R."/>
            <person name="Ficarro S.B."/>
            <person name="Mukherji M."/>
            <person name="Stettler-Gill M."/>
            <person name="Peters E.C."/>
        </authorList>
    </citation>
    <scope>IDENTIFICATION BY MASS SPECTROMETRY [LARGE SCALE ANALYSIS]</scope>
    <source>
        <tissue>Leukemic T-cell</tissue>
    </source>
</reference>
<reference key="8">
    <citation type="journal article" date="2006" name="Cell">
        <title>Global, in vivo, and site-specific phosphorylation dynamics in signaling networks.</title>
        <authorList>
            <person name="Olsen J.V."/>
            <person name="Blagoev B."/>
            <person name="Gnad F."/>
            <person name="Macek B."/>
            <person name="Kumar C."/>
            <person name="Mortensen P."/>
            <person name="Mann M."/>
        </authorList>
    </citation>
    <scope>PHOSPHORYLATION [LARGE SCALE ANALYSIS] AT SER-240; SER-243; SER-248; SER-253; SER-315; SER-320; SER-575; SER-672 AND SER-928</scope>
    <scope>IDENTIFICATION BY MASS SPECTROMETRY [LARGE SCALE ANALYSIS]</scope>
    <source>
        <tissue>Cervix carcinoma</tissue>
    </source>
</reference>
<reference key="9">
    <citation type="journal article" date="2006" name="Nat. Biotechnol.">
        <title>A probability-based approach for high-throughput protein phosphorylation analysis and site localization.</title>
        <authorList>
            <person name="Beausoleil S.A."/>
            <person name="Villen J."/>
            <person name="Gerber S.A."/>
            <person name="Rush J."/>
            <person name="Gygi S.P."/>
        </authorList>
    </citation>
    <scope>PHOSPHORYLATION [LARGE SCALE ANALYSIS] AT SER-243</scope>
    <scope>IDENTIFICATION BY MASS SPECTROMETRY [LARGE SCALE ANALYSIS]</scope>
    <source>
        <tissue>Cervix carcinoma</tissue>
    </source>
</reference>
<reference key="10">
    <citation type="journal article" date="2007" name="J. Proteome Res.">
        <title>Improved titanium dioxide enrichment of phosphopeptides from HeLa cells and high confident phosphopeptide identification by cross-validation of MS/MS and MS/MS/MS spectra.</title>
        <authorList>
            <person name="Yu L.R."/>
            <person name="Zhu Z."/>
            <person name="Chan K.C."/>
            <person name="Issaq H.J."/>
            <person name="Dimitrov D.S."/>
            <person name="Veenstra T.D."/>
        </authorList>
    </citation>
    <scope>IDENTIFICATION BY MASS SPECTROMETRY [LARGE SCALE ANALYSIS]</scope>
    <source>
        <tissue>Cervix carcinoma</tissue>
    </source>
</reference>
<reference key="11">
    <citation type="journal article" date="2007" name="RNA">
        <title>Protein composition of human mRNPs spliced in vitro and differential requirements for mRNP protein recruitment.</title>
        <authorList>
            <person name="Merz C."/>
            <person name="Urlaub H."/>
            <person name="Will C.L."/>
            <person name="Luhrmann R."/>
        </authorList>
    </citation>
    <scope>SUBUNIT</scope>
</reference>
<reference key="12">
    <citation type="journal article" date="2007" name="Science">
        <title>ATM and ATR substrate analysis reveals extensive protein networks responsive to DNA damage.</title>
        <authorList>
            <person name="Matsuoka S."/>
            <person name="Ballif B.A."/>
            <person name="Smogorzewska A."/>
            <person name="McDonald E.R. III"/>
            <person name="Hurov K.E."/>
            <person name="Luo J."/>
            <person name="Bakalarski C.E."/>
            <person name="Zhao Z."/>
            <person name="Solimini N."/>
            <person name="Lerenthal Y."/>
            <person name="Shiloh Y."/>
            <person name="Gygi S.P."/>
            <person name="Elledge S.J."/>
        </authorList>
    </citation>
    <scope>IDENTIFICATION BY MASS SPECTROMETRY [LARGE SCALE ANALYSIS]</scope>
    <source>
        <tissue>Embryonic kidney</tissue>
    </source>
</reference>
<reference key="13">
    <citation type="journal article" date="2008" name="Cancer Res.">
        <title>Regulation of cyclin D1 RNA stability by SNIP1.</title>
        <authorList>
            <person name="Bracken C.P."/>
            <person name="Wall S.J."/>
            <person name="Barre B."/>
            <person name="Panov K.I."/>
            <person name="Ajuh P.M."/>
            <person name="Perkins N.D."/>
        </authorList>
    </citation>
    <scope>IDENTIFICATION IN THE SNARP COMPLEX</scope>
</reference>
<reference key="14">
    <citation type="journal article" date="2008" name="J. Proteome Res.">
        <title>Combining protein-based IMAC, peptide-based IMAC, and MudPIT for efficient phosphoproteomic analysis.</title>
        <authorList>
            <person name="Cantin G.T."/>
            <person name="Yi W."/>
            <person name="Lu B."/>
            <person name="Park S.K."/>
            <person name="Xu T."/>
            <person name="Lee J.-D."/>
            <person name="Yates J.R. III"/>
        </authorList>
    </citation>
    <scope>PHOSPHORYLATION [LARGE SCALE ANALYSIS] AT SER-243; SER-248 AND SER-253</scope>
    <scope>IDENTIFICATION BY MASS SPECTROMETRY [LARGE SCALE ANALYSIS]</scope>
    <source>
        <tissue>Cervix carcinoma</tissue>
    </source>
</reference>
<reference key="15">
    <citation type="journal article" date="2008" name="J. Proteome Res.">
        <title>Phosphorylation analysis of primary human T lymphocytes using sequential IMAC and titanium oxide enrichment.</title>
        <authorList>
            <person name="Carrascal M."/>
            <person name="Ovelleiro D."/>
            <person name="Casas V."/>
            <person name="Gay M."/>
            <person name="Abian J."/>
        </authorList>
    </citation>
    <scope>PHOSPHORYLATION [LARGE SCALE ANALYSIS] AT SER-243</scope>
    <scope>IDENTIFICATION BY MASS SPECTROMETRY [LARGE SCALE ANALYSIS]</scope>
    <source>
        <tissue>T-cell</tissue>
    </source>
</reference>
<reference key="16">
    <citation type="journal article" date="2008" name="Mol. Cell">
        <title>Kinase-selective enrichment enables quantitative phosphoproteomics of the kinome across the cell cycle.</title>
        <authorList>
            <person name="Daub H."/>
            <person name="Olsen J.V."/>
            <person name="Bairlein M."/>
            <person name="Gnad F."/>
            <person name="Oppermann F.S."/>
            <person name="Korner R."/>
            <person name="Greff Z."/>
            <person name="Keri G."/>
            <person name="Stemmann O."/>
            <person name="Mann M."/>
        </authorList>
    </citation>
    <scope>PHOSPHORYLATION [LARGE SCALE ANALYSIS] AT SER-243</scope>
    <scope>IDENTIFICATION BY MASS SPECTROMETRY [LARGE SCALE ANALYSIS]</scope>
    <source>
        <tissue>Cervix carcinoma</tissue>
    </source>
</reference>
<reference key="17">
    <citation type="journal article" date="2008" name="Proc. Natl. Acad. Sci. U.S.A.">
        <title>A quantitative atlas of mitotic phosphorylation.</title>
        <authorList>
            <person name="Dephoure N."/>
            <person name="Zhou C."/>
            <person name="Villen J."/>
            <person name="Beausoleil S.A."/>
            <person name="Bakalarski C.E."/>
            <person name="Elledge S.J."/>
            <person name="Gygi S.P."/>
        </authorList>
    </citation>
    <scope>PHOSPHORYLATION [LARGE SCALE ANALYSIS] AT SER-232; SER-237; SER-240; SER-243; SER-248; SER-253; SER-379; SER-406; SER-408; SER-575; SER-682; THR-874; SER-928 AND SER-939</scope>
    <scope>IDENTIFICATION BY MASS SPECTROMETRY [LARGE SCALE ANALYSIS]</scope>
    <source>
        <tissue>Cervix carcinoma</tissue>
    </source>
</reference>
<reference key="18">
    <citation type="journal article" date="2008" name="Proteomics">
        <title>Large-scale phosphoproteome analysis of human liver tissue by enrichment and fractionation of phosphopeptides with strong anion exchange chromatography.</title>
        <authorList>
            <person name="Han G."/>
            <person name="Ye M."/>
            <person name="Zhou H."/>
            <person name="Jiang X."/>
            <person name="Feng S."/>
            <person name="Jiang X."/>
            <person name="Tian R."/>
            <person name="Wan D."/>
            <person name="Zou H."/>
            <person name="Gu J."/>
        </authorList>
    </citation>
    <scope>PHOSPHORYLATION [LARGE SCALE ANALYSIS] AT SER-928</scope>
    <scope>IDENTIFICATION BY MASS SPECTROMETRY [LARGE SCALE ANALYSIS]</scope>
    <source>
        <tissue>Liver</tissue>
    </source>
</reference>
<reference key="19">
    <citation type="journal article" date="2009" name="Anal. Chem.">
        <title>Lys-N and trypsin cover complementary parts of the phosphoproteome in a refined SCX-based approach.</title>
        <authorList>
            <person name="Gauci S."/>
            <person name="Helbig A.O."/>
            <person name="Slijper M."/>
            <person name="Krijgsveld J."/>
            <person name="Heck A.J."/>
            <person name="Mohammed S."/>
        </authorList>
    </citation>
    <scope>IDENTIFICATION BY MASS SPECTROMETRY [LARGE SCALE ANALYSIS]</scope>
</reference>
<reference key="20">
    <citation type="journal article" date="2009" name="Sci. Signal.">
        <title>Quantitative phosphoproteomic analysis of T cell receptor signaling reveals system-wide modulation of protein-protein interactions.</title>
        <authorList>
            <person name="Mayya V."/>
            <person name="Lundgren D.H."/>
            <person name="Hwang S.-I."/>
            <person name="Rezaul K."/>
            <person name="Wu L."/>
            <person name="Eng J.K."/>
            <person name="Rodionov V."/>
            <person name="Han D.K."/>
        </authorList>
    </citation>
    <scope>PHOSPHORYLATION [LARGE SCALE ANALYSIS] AT THR-874; SER-928 AND SER-939</scope>
    <scope>IDENTIFICATION BY MASS SPECTROMETRY [LARGE SCALE ANALYSIS]</scope>
    <source>
        <tissue>Leukemic T-cell</tissue>
    </source>
</reference>
<reference key="21">
    <citation type="journal article" date="2009" name="Science">
        <title>Lysine acetylation targets protein complexes and co-regulates major cellular functions.</title>
        <authorList>
            <person name="Choudhary C."/>
            <person name="Kumar C."/>
            <person name="Gnad F."/>
            <person name="Nielsen M.L."/>
            <person name="Rehman M."/>
            <person name="Walther T.C."/>
            <person name="Olsen J.V."/>
            <person name="Mann M."/>
        </authorList>
    </citation>
    <scope>ACETYLATION [LARGE SCALE ANALYSIS] AT LYS-221; LYS-455; LYS-519 AND LYS-811</scope>
    <scope>IDENTIFICATION BY MASS SPECTROMETRY [LARGE SCALE ANALYSIS]</scope>
</reference>
<reference key="22">
    <citation type="journal article" date="2010" name="Mol. Cell">
        <title>Phosphorylation-dependent regulation of PSF by GSK3 controls CD45 alternative splicing.</title>
        <authorList>
            <person name="Heyd F."/>
            <person name="Lynch K.W."/>
        </authorList>
    </citation>
    <scope>FUNCTION</scope>
    <scope>INTERACTION WITH SFPQ</scope>
</reference>
<reference key="23">
    <citation type="journal article" date="2010" name="Nucleic Acids Res.">
        <title>TRAP150 activates pre-mRNA splicing and promotes nuclear mRNA degradation.</title>
        <authorList>
            <person name="Lee K.M."/>
            <person name="Hsu I.W."/>
            <person name="Tarn W.Y."/>
        </authorList>
    </citation>
    <scope>FUNCTION</scope>
    <scope>SUBCELLULAR LOCATION</scope>
    <scope>INTERACTION WITH NXF1</scope>
</reference>
<reference key="24">
    <citation type="journal article" date="2010" name="Sci. Signal.">
        <title>Quantitative phosphoproteomics reveals widespread full phosphorylation site occupancy during mitosis.</title>
        <authorList>
            <person name="Olsen J.V."/>
            <person name="Vermeulen M."/>
            <person name="Santamaria A."/>
            <person name="Kumar C."/>
            <person name="Miller M.L."/>
            <person name="Jensen L.J."/>
            <person name="Gnad F."/>
            <person name="Cox J."/>
            <person name="Jensen T.S."/>
            <person name="Nigg E.A."/>
            <person name="Brunak S."/>
            <person name="Mann M."/>
        </authorList>
    </citation>
    <scope>PHOSPHORYLATION [LARGE SCALE ANALYSIS] AT SER-232; SER-243; SER-248; SER-253; SER-257; SER-315; SER-320; SER-379; SER-408; SER-575; SER-622; SER-682; SER-698; SER-928 AND SER-939</scope>
    <scope>IDENTIFICATION BY MASS SPECTROMETRY [LARGE SCALE ANALYSIS]</scope>
    <source>
        <tissue>Cervix carcinoma</tissue>
    </source>
</reference>
<reference key="25">
    <citation type="journal article" date="2011" name="BMC Syst. Biol.">
        <title>Initial characterization of the human central proteome.</title>
        <authorList>
            <person name="Burkard T.R."/>
            <person name="Planyavsky M."/>
            <person name="Kaupe I."/>
            <person name="Breitwieser F.P."/>
            <person name="Buerckstuemmer T."/>
            <person name="Bennett K.L."/>
            <person name="Superti-Furga G."/>
            <person name="Colinge J."/>
        </authorList>
    </citation>
    <scope>IDENTIFICATION BY MASS SPECTROMETRY [LARGE SCALE ANALYSIS]</scope>
</reference>
<reference key="26">
    <citation type="journal article" date="2011" name="Sci. Signal.">
        <title>System-wide temporal characterization of the proteome and phosphoproteome of human embryonic stem cell differentiation.</title>
        <authorList>
            <person name="Rigbolt K.T."/>
            <person name="Prokhorova T.A."/>
            <person name="Akimov V."/>
            <person name="Henningsen J."/>
            <person name="Johansen P.T."/>
            <person name="Kratchmarova I."/>
            <person name="Kassem M."/>
            <person name="Mann M."/>
            <person name="Olsen J.V."/>
            <person name="Blagoev B."/>
        </authorList>
    </citation>
    <scope>PHOSPHORYLATION [LARGE SCALE ANALYSIS] AT SER-243; SER-253; SER-315; SER-320; SER-339; SER-379; SER-406; SER-408; SER-535; SER-575; SER-622; SER-682; SER-698; SER-928 AND SER-939</scope>
    <scope>IDENTIFICATION BY MASS SPECTROMETRY [LARGE SCALE ANALYSIS]</scope>
</reference>
<reference key="27">
    <citation type="journal article" date="2012" name="Mol. Cell">
        <title>Proteomic investigations reveal a role for RNA processing factor THRAP3 in the DNA damage response.</title>
        <authorList>
            <person name="Beli P."/>
            <person name="Lukashchuk N."/>
            <person name="Wagner S.A."/>
            <person name="Weinert B.T."/>
            <person name="Olsen J.V."/>
            <person name="Baskcomb L."/>
            <person name="Mann M."/>
            <person name="Jackson S.P."/>
            <person name="Choudhary C."/>
        </authorList>
    </citation>
    <scope>FUNCTION</scope>
    <scope>PHOSPHORYLATION</scope>
    <scope>MUTAGENESIS OF SER-406 AND SER-408</scope>
</reference>
<reference key="28">
    <citation type="journal article" date="2012" name="Proc. Natl. Acad. Sci. U.S.A.">
        <title>N-terminal acetylome analyses and functional insights of the N-terminal acetyltransferase NatB.</title>
        <authorList>
            <person name="Van Damme P."/>
            <person name="Lasa M."/>
            <person name="Polevoda B."/>
            <person name="Gazquez C."/>
            <person name="Elosegui-Artola A."/>
            <person name="Kim D.S."/>
            <person name="De Juan-Pardo E."/>
            <person name="Demeyer K."/>
            <person name="Hole K."/>
            <person name="Larrea E."/>
            <person name="Timmerman E."/>
            <person name="Prieto J."/>
            <person name="Arnesen T."/>
            <person name="Sherman F."/>
            <person name="Gevaert K."/>
            <person name="Aldabe R."/>
        </authorList>
    </citation>
    <scope>ACETYLATION [LARGE SCALE ANALYSIS] AT SER-2</scope>
    <scope>CLEAVAGE OF INITIATOR METHIONINE [LARGE SCALE ANALYSIS]</scope>
    <scope>IDENTIFICATION BY MASS SPECTROMETRY [LARGE SCALE ANALYSIS]</scope>
</reference>
<reference key="29">
    <citation type="journal article" date="2013" name="J. Biol. Chem.">
        <title>Identification of Wilms' tumor 1-associating protein complex and its role in alternative splicing and the cell cycle.</title>
        <authorList>
            <person name="Horiuchi K."/>
            <person name="Kawamura T."/>
            <person name="Iwanari H."/>
            <person name="Ohashi R."/>
            <person name="Naito M."/>
            <person name="Kodama T."/>
            <person name="Hamakubo T."/>
        </authorList>
    </citation>
    <scope>IDENTIFICATION IN A MACOM-LIKE COMPLEX</scope>
    <scope>SUBCELLULAR LOCATION</scope>
</reference>
<reference key="30">
    <citation type="journal article" date="2013" name="J. Proteome Res.">
        <title>Toward a comprehensive characterization of a human cancer cell phosphoproteome.</title>
        <authorList>
            <person name="Zhou H."/>
            <person name="Di Palma S."/>
            <person name="Preisinger C."/>
            <person name="Peng M."/>
            <person name="Polat A.N."/>
            <person name="Heck A.J."/>
            <person name="Mohammed S."/>
        </authorList>
    </citation>
    <scope>PHOSPHORYLATION [LARGE SCALE ANALYSIS] AT SER-220; SER-232; SER-237; SER-240; SER-243; SER-248; SER-253; SER-257; SER-315; SER-320; SER-323; SER-326; SER-377; SER-379; THR-397; SER-406; SER-408; SER-444; SER-468; SER-560; SER-562; SER-575; SER-619; SER-682; SER-698; THR-874; SER-928 AND SER-939</scope>
    <scope>IDENTIFICATION BY MASS SPECTROMETRY [LARGE SCALE ANALYSIS]</scope>
    <source>
        <tissue>Cervix carcinoma</tissue>
        <tissue>Erythroleukemia</tissue>
    </source>
</reference>
<reference key="31">
    <citation type="journal article" date="2013" name="Mol. Cell">
        <title>Proteome-wide identification of poly(ADP-Ribosyl)ation targets in different genotoxic stress responses.</title>
        <authorList>
            <person name="Jungmichel S."/>
            <person name="Rosenthal F."/>
            <person name="Altmeyer M."/>
            <person name="Lukas J."/>
            <person name="Hottiger M.O."/>
            <person name="Nielsen M.L."/>
        </authorList>
    </citation>
    <scope>ADP-RIBOSYLATION</scope>
</reference>
<reference key="32">
    <citation type="journal article" date="2013" name="Mol. Endocrinol.">
        <title>THRAP3 interacts with HELZ2 and plays a novel role in adipocyte differentiation.</title>
        <authorList>
            <person name="Katano-Toki A."/>
            <person name="Satoh T."/>
            <person name="Tomaru T."/>
            <person name="Yoshino S."/>
            <person name="Ishizuka T."/>
            <person name="Ishii S."/>
            <person name="Ozawa A."/>
            <person name="Shibusawa N."/>
            <person name="Tsuchiya T."/>
            <person name="Saito T."/>
            <person name="Shimizu H."/>
            <person name="Hashimoto K."/>
            <person name="Okada S."/>
            <person name="Yamada M."/>
            <person name="Mori M."/>
        </authorList>
    </citation>
    <scope>FUNCTION</scope>
    <scope>INTERACTION WITH HELZ2 AND PPARG</scope>
    <scope>IDENTIFICATION BY MASS SPECTROMETRY</scope>
    <scope>SUBCELLULAR LOCATION</scope>
</reference>
<reference key="33">
    <citation type="journal article" date="2013" name="Proc. Natl. Acad. Sci. U.S.A.">
        <title>A positive feedback loop links circadian clock factor CLOCK-BMAL1 to the basic transcriptional machinery.</title>
        <authorList>
            <person name="Lande-Diner L."/>
            <person name="Boyault C."/>
            <person name="Kim J.Y."/>
            <person name="Weitz C.J."/>
        </authorList>
    </citation>
    <scope>FUNCTION</scope>
</reference>
<reference key="34">
    <citation type="journal article" date="2014" name="J. Proteomics">
        <title>An enzyme assisted RP-RPLC approach for in-depth analysis of human liver phosphoproteome.</title>
        <authorList>
            <person name="Bian Y."/>
            <person name="Song C."/>
            <person name="Cheng K."/>
            <person name="Dong M."/>
            <person name="Wang F."/>
            <person name="Huang J."/>
            <person name="Sun D."/>
            <person name="Wang L."/>
            <person name="Ye M."/>
            <person name="Zou H."/>
        </authorList>
    </citation>
    <scope>PHOSPHORYLATION [LARGE SCALE ANALYSIS] AT SER-248; SER-253; SER-257; SER-320; SER-377; SER-560; SER-575; SER-682 AND SER-684</scope>
    <scope>IDENTIFICATION BY MASS SPECTROMETRY [LARGE SCALE ANALYSIS]</scope>
    <source>
        <tissue>Liver</tissue>
    </source>
</reference>
<reference key="35">
    <citation type="journal article" date="2014" name="Mol. Cell. Proteomics">
        <title>Immunoaffinity enrichment and mass spectrometry analysis of protein methylation.</title>
        <authorList>
            <person name="Guo A."/>
            <person name="Gu H."/>
            <person name="Zhou J."/>
            <person name="Mulhern D."/>
            <person name="Wang Y."/>
            <person name="Lee K.A."/>
            <person name="Yang V."/>
            <person name="Aguiar M."/>
            <person name="Kornhauser J."/>
            <person name="Jia X."/>
            <person name="Ren J."/>
            <person name="Beausoleil S.A."/>
            <person name="Silva J.C."/>
            <person name="Vemulapalli V."/>
            <person name="Bedford M.T."/>
            <person name="Comb M.J."/>
        </authorList>
    </citation>
    <scope>METHYLATION [LARGE SCALE ANALYSIS] AT ARG-66; ARG-101; ARG-108 AND LYS-252</scope>
    <scope>IDENTIFICATION BY MASS SPECTROMETRY [LARGE SCALE ANALYSIS]</scope>
    <source>
        <tissue>Colon carcinoma</tissue>
    </source>
</reference>
<reference key="36">
    <citation type="journal article" date="2014" name="Nat. Struct. Mol. Biol.">
        <title>Uncovering global SUMOylation signaling networks in a site-specific manner.</title>
        <authorList>
            <person name="Hendriks I.A."/>
            <person name="D'Souza R.C."/>
            <person name="Yang B."/>
            <person name="Verlaan-de Vries M."/>
            <person name="Mann M."/>
            <person name="Vertegaal A.C."/>
        </authorList>
    </citation>
    <scope>SUMOYLATION [LARGE SCALE ANALYSIS] AT LYS-451; LYS-467; LYS-470; LYS-486; LYS-705; LYS-711; LYS-756 AND LYS-759</scope>
    <scope>IDENTIFICATION BY MASS SPECTROMETRY [LARGE SCALE ANALYSIS]</scope>
</reference>
<reference key="37">
    <citation type="journal article" date="2014" name="Proc. Natl. Acad. Sci. U.S.A.">
        <title>Mapping of SUMO sites and analysis of SUMOylation changes induced by external stimuli.</title>
        <authorList>
            <person name="Impens F."/>
            <person name="Radoshevich L."/>
            <person name="Cossart P."/>
            <person name="Ribet D."/>
        </authorList>
    </citation>
    <scope>SUMOYLATION [LARGE SCALE ANALYSIS] AT LYS-202; LYS-387 AND LYS-451</scope>
    <scope>IDENTIFICATION BY MASS SPECTROMETRY [LARGE SCALE ANALYSIS]</scope>
</reference>
<reference key="38">
    <citation type="journal article" date="2015" name="Cell Rep.">
        <title>SUMO-2 orchestrates chromatin modifiers in response to DNA damage.</title>
        <authorList>
            <person name="Hendriks I.A."/>
            <person name="Treffers L.W."/>
            <person name="Verlaan-de Vries M."/>
            <person name="Olsen J.V."/>
            <person name="Vertegaal A.C."/>
        </authorList>
    </citation>
    <scope>SUMOYLATION [LARGE SCALE ANALYSIS] AT LYS-486</scope>
    <scope>IDENTIFICATION BY MASS SPECTROMETRY [LARGE SCALE ANALYSIS]</scope>
</reference>
<reference key="39">
    <citation type="journal article" date="2015" name="Mol. Cell. Proteomics">
        <title>System-wide analysis of SUMOylation dynamics in response to replication stress reveals novel small ubiquitin-like modified target proteins and acceptor lysines relevant for genome stability.</title>
        <authorList>
            <person name="Xiao Z."/>
            <person name="Chang J.G."/>
            <person name="Hendriks I.A."/>
            <person name="Sigurdsson J.O."/>
            <person name="Olsen J.V."/>
            <person name="Vertegaal A.C."/>
        </authorList>
    </citation>
    <scope>SUMOYLATION [LARGE SCALE ANALYSIS] AT LYS-396; LYS-427; LYS-451; LYS-470; LYS-486; LYS-527; LYS-697; LYS-705 AND LYS-711</scope>
    <scope>IDENTIFICATION BY MASS SPECTROMETRY [LARGE SCALE ANALYSIS]</scope>
</reference>
<reference key="40">
    <citation type="journal article" date="2017" name="Nat. Struct. Mol. Biol.">
        <title>Site-specific mapping of the human SUMO proteome reveals co-modification with phosphorylation.</title>
        <authorList>
            <person name="Hendriks I.A."/>
            <person name="Lyon D."/>
            <person name="Young C."/>
            <person name="Jensen L.J."/>
            <person name="Vertegaal A.C."/>
            <person name="Nielsen M.L."/>
        </authorList>
    </citation>
    <scope>SUMOYLATION [LARGE SCALE ANALYSIS] AT LYS-202; LYS-215; LYS-221; LYS-252; LYS-333; LYS-346; LYS-353; LYS-375; LYS-387; LYS-389; LYS-396; LYS-401; LYS-421; LYS-427; LYS-451; LYS-455; LYS-461; LYS-467; LYS-470; LYS-481; LYS-486; LYS-527; LYS-551; LYS-558; LYS-602; LYS-697; LYS-705; LYS-709; LYS-711; LYS-876 AND LYS-879</scope>
    <scope>IDENTIFICATION BY MASS SPECTROMETRY [LARGE SCALE ANALYSIS]</scope>
</reference>
<keyword id="KW-0007">Acetylation</keyword>
<keyword id="KW-0010">Activator</keyword>
<keyword id="KW-0013">ADP-ribosylation</keyword>
<keyword id="KW-0067">ATP-binding</keyword>
<keyword id="KW-0090">Biological rhythms</keyword>
<keyword id="KW-0903">Direct protein sequencing</keyword>
<keyword id="KW-1017">Isopeptide bond</keyword>
<keyword id="KW-0488">Methylation</keyword>
<keyword id="KW-0507">mRNA processing</keyword>
<keyword id="KW-0508">mRNA splicing</keyword>
<keyword id="KW-0547">Nucleotide-binding</keyword>
<keyword id="KW-0539">Nucleus</keyword>
<keyword id="KW-0597">Phosphoprotein</keyword>
<keyword id="KW-1267">Proteomics identification</keyword>
<keyword id="KW-0675">Receptor</keyword>
<keyword id="KW-1185">Reference proteome</keyword>
<keyword id="KW-0804">Transcription</keyword>
<keyword id="KW-0805">Transcription regulation</keyword>
<keyword id="KW-0832">Ubl conjugation</keyword>
<proteinExistence type="evidence at protein level"/>
<comment type="function">
    <text evidence="8 9 10 11 12">Involved in pre-mRNA splicing. Remains associated with spliced mRNA after splicing which probably involves interactions with the exon junction complex (EJC). Can trigger mRNA decay which seems to be independent of nonsense-mediated decay involving premature stop codons (PTC) recognition. May be involved in nuclear mRNA decay. Involved in regulation of signal-induced alternative splicing. During splicing of PTPRC/CD45 is proposed to sequester phosphorylated SFPQ from PTPRC/CD45 pre-mRNA in resting T-cells. Involved in cyclin-D1/CCND1 mRNA stability probably by acting as component of the SNARP complex which associates with both the 3'end of the CCND1 gene and its mRNA. Involved in response to DNA damage. Is excluced from DNA damage sites in a manner that parallels transcription inhibition; the function may involve the SNARP complex. Initially thought to play a role in transcriptional coactivation through its association with the TRAP complex; however, it is not regarded as a stable Mediator complex subunit. Cooperatively with HELZ2, enhances the transcriptional activation mediated by PPARG, maybe through the stabilization of the PPARG binding to DNA in presence of ligand. May play a role in the terminal stage of adipocyte differentiation. Plays a role in the positive regulation of the circadian clock. Acts as a coactivator of the CLOCK-BMAL1 heterodimer and promotes its transcriptional activator activity and binding to circadian target genes (PubMed:24043798).</text>
</comment>
<comment type="subunit">
    <text evidence="1 4 6 7 8 9 11 13">Associated with the large multiprotein complex TRAP (Mediator complex-like). Interacts with SFPQ; the interaction is dependent on SFPQ phosphorylation at 'Thr-687' and inhibits binding of SFPQ to an ESS1 exonic splicing silencer element-containing RNA. Interacts with NXF1. Component of the SNARP complex which consists at least of SNIP1, SNW1, THRAP3, BCLAF1 and PNN. Associated with spliced mRNP complexes. Interacts with HELZ2 and PPARG. Interacts with CLOCK and BMAL1 (By similarity). Component of a MACOM-like complex, named WTAP complex, composed of WTAP, ZC3H13, CBLL1, KIAA1429, RBM15, BCLAF1 and THRAP3.</text>
</comment>
<comment type="interaction">
    <interactant intactId="EBI-352039">
        <id>Q9Y2W1</id>
    </interactant>
    <interactant intactId="EBI-347804">
        <id>P68400</id>
        <label>CSNK2A1</label>
    </interactant>
    <organismsDiffer>false</organismsDiffer>
    <experiments>2</experiments>
</comment>
<comment type="interaction">
    <interactant intactId="EBI-352039">
        <id>Q9Y2W1</id>
    </interactant>
    <interactant intactId="EBI-299104">
        <id>P38919</id>
        <label>EIF4A3</label>
    </interactant>
    <organismsDiffer>false</organismsDiffer>
    <experiments>2</experiments>
</comment>
<comment type="interaction">
    <interactant intactId="EBI-352039">
        <id>Q9Y2W1</id>
    </interactant>
    <interactant intactId="EBI-398874">
        <id>Q9UBU9</id>
        <label>NXF1</label>
    </interactant>
    <organismsDiffer>false</organismsDiffer>
    <experiments>4</experiments>
</comment>
<comment type="interaction">
    <interactant intactId="EBI-352039">
        <id>Q9Y2W1</id>
    </interactant>
    <interactant intactId="EBI-447231">
        <id>Q9Y5S9</id>
        <label>RBM8A</label>
    </interactant>
    <organismsDiffer>false</organismsDiffer>
    <experiments>2</experiments>
</comment>
<comment type="interaction">
    <interactant intactId="EBI-352039">
        <id>Q9Y2W1</id>
    </interactant>
    <interactant intactId="EBI-355453">
        <id>P23246</id>
        <label>SFPQ</label>
    </interactant>
    <organismsDiffer>false</organismsDiffer>
    <experiments>6</experiments>
</comment>
<comment type="interaction">
    <interactant intactId="EBI-352039">
        <id>Q9Y2W1</id>
    </interactant>
    <interactant intactId="EBI-632715">
        <id>Q13573</id>
        <label>SNW1</label>
    </interactant>
    <organismsDiffer>false</organismsDiffer>
    <experiments>4</experiments>
</comment>
<comment type="subcellular location">
    <subcellularLocation>
        <location evidence="8 11">Nucleus</location>
    </subcellularLocation>
    <subcellularLocation>
        <location evidence="13">Nucleus</location>
        <location evidence="13">Nucleoplasm</location>
    </subcellularLocation>
    <subcellularLocation>
        <location evidence="13">Nucleus speckle</location>
    </subcellularLocation>
</comment>
<comment type="tissue specificity">
    <text evidence="4">Ubiquitous.</text>
</comment>
<comment type="PTM">
    <text>ADP-ribosylation during genotoxic stress promotes accumulation in nuclear speckles.</text>
</comment>
<comment type="similarity">
    <text evidence="16">Belongs to the BCLAF1/THRAP3 family.</text>
</comment>
<comment type="sequence caution" evidence="16">
    <conflict type="miscellaneous discrepancy">
        <sequence resource="EMBL-CDS" id="AAH37554"/>
    </conflict>
    <text>Contaminating sequence. Potential poly-A sequence.</text>
</comment>
<comment type="online information" name="Atlas of Genetics and Cytogenetics in Oncology and Haematology">
    <link uri="https://atlasgeneticsoncology.org/gene/42960/THRAP3"/>
</comment>
<gene>
    <name evidence="17" type="primary">THRAP3</name>
    <name evidence="17" type="synonym">BCLAF2</name>
    <name type="synonym">TRAP150</name>
</gene>
<dbReference type="EMBL" id="AF117756">
    <property type="protein sequence ID" value="AAD22034.1"/>
    <property type="molecule type" value="mRNA"/>
</dbReference>
<dbReference type="EMBL" id="AL591845">
    <property type="status" value="NOT_ANNOTATED_CDS"/>
    <property type="molecule type" value="Genomic_DNA"/>
</dbReference>
<dbReference type="EMBL" id="CH471059">
    <property type="protein sequence ID" value="EAX07379.1"/>
    <property type="molecule type" value="Genomic_DNA"/>
</dbReference>
<dbReference type="EMBL" id="CH471059">
    <property type="protein sequence ID" value="EAX07380.1"/>
    <property type="molecule type" value="Genomic_DNA"/>
</dbReference>
<dbReference type="EMBL" id="BC037554">
    <property type="protein sequence ID" value="AAH37554.1"/>
    <property type="status" value="ALT_SEQ"/>
    <property type="molecule type" value="mRNA"/>
</dbReference>
<dbReference type="EMBL" id="BC112330">
    <property type="protein sequence ID" value="AAI12331.1"/>
    <property type="molecule type" value="mRNA"/>
</dbReference>
<dbReference type="EMBL" id="BC112350">
    <property type="protein sequence ID" value="AAI12351.1"/>
    <property type="molecule type" value="mRNA"/>
</dbReference>
<dbReference type="CCDS" id="CCDS405.1"/>
<dbReference type="RefSeq" id="NP_001308400.1">
    <property type="nucleotide sequence ID" value="NM_001321471.2"/>
</dbReference>
<dbReference type="RefSeq" id="NP_001308402.1">
    <property type="nucleotide sequence ID" value="NM_001321473.1"/>
</dbReference>
<dbReference type="RefSeq" id="NP_005110.2">
    <property type="nucleotide sequence ID" value="NM_005119.4"/>
</dbReference>
<dbReference type="RefSeq" id="XP_047292168.1">
    <property type="nucleotide sequence ID" value="XM_047436212.1"/>
</dbReference>
<dbReference type="RefSeq" id="XP_047292171.1">
    <property type="nucleotide sequence ID" value="XM_047436215.1"/>
</dbReference>
<dbReference type="RefSeq" id="XP_047292174.1">
    <property type="nucleotide sequence ID" value="XM_047436218.1"/>
</dbReference>
<dbReference type="RefSeq" id="XP_047292178.1">
    <property type="nucleotide sequence ID" value="XM_047436222.1"/>
</dbReference>
<dbReference type="RefSeq" id="XP_047292182.1">
    <property type="nucleotide sequence ID" value="XM_047436226.1"/>
</dbReference>
<dbReference type="RefSeq" id="XP_047292183.1">
    <property type="nucleotide sequence ID" value="XM_047436227.1"/>
</dbReference>
<dbReference type="RefSeq" id="XP_047292188.1">
    <property type="nucleotide sequence ID" value="XM_047436232.1"/>
</dbReference>
<dbReference type="RefSeq" id="XP_047292189.1">
    <property type="nucleotide sequence ID" value="XM_047436233.1"/>
</dbReference>
<dbReference type="RefSeq" id="XP_054195943.1">
    <property type="nucleotide sequence ID" value="XM_054339968.1"/>
</dbReference>
<dbReference type="RefSeq" id="XP_054195944.1">
    <property type="nucleotide sequence ID" value="XM_054339969.1"/>
</dbReference>
<dbReference type="RefSeq" id="XP_054195945.1">
    <property type="nucleotide sequence ID" value="XM_054339970.1"/>
</dbReference>
<dbReference type="RefSeq" id="XP_054195946.1">
    <property type="nucleotide sequence ID" value="XM_054339971.1"/>
</dbReference>
<dbReference type="RefSeq" id="XP_054195947.1">
    <property type="nucleotide sequence ID" value="XM_054339972.1"/>
</dbReference>
<dbReference type="RefSeq" id="XP_054195948.1">
    <property type="nucleotide sequence ID" value="XM_054339973.1"/>
</dbReference>
<dbReference type="RefSeq" id="XP_054195949.1">
    <property type="nucleotide sequence ID" value="XM_054339974.1"/>
</dbReference>
<dbReference type="RefSeq" id="XP_054195950.1">
    <property type="nucleotide sequence ID" value="XM_054339975.1"/>
</dbReference>
<dbReference type="BioGRID" id="115292">
    <property type="interactions" value="460"/>
</dbReference>
<dbReference type="ComplexPortal" id="CPX-2653">
    <property type="entry name" value="SNIP1/SkIP associated RNA-processing complex"/>
</dbReference>
<dbReference type="CORUM" id="Q9Y2W1"/>
<dbReference type="FunCoup" id="Q9Y2W1">
    <property type="interactions" value="4557"/>
</dbReference>
<dbReference type="IntAct" id="Q9Y2W1">
    <property type="interactions" value="220"/>
</dbReference>
<dbReference type="MINT" id="Q9Y2W1"/>
<dbReference type="STRING" id="9606.ENSP00000346634"/>
<dbReference type="ChEMBL" id="CHEMBL4105820"/>
<dbReference type="GlyCosmos" id="Q9Y2W1">
    <property type="glycosylation" value="1 site, 1 glycan"/>
</dbReference>
<dbReference type="GlyGen" id="Q9Y2W1">
    <property type="glycosylation" value="6 sites, 1 O-linked glycan (6 sites)"/>
</dbReference>
<dbReference type="iPTMnet" id="Q9Y2W1"/>
<dbReference type="MetOSite" id="Q9Y2W1"/>
<dbReference type="PhosphoSitePlus" id="Q9Y2W1"/>
<dbReference type="SwissPalm" id="Q9Y2W1"/>
<dbReference type="BioMuta" id="THRAP3"/>
<dbReference type="DMDM" id="97537467"/>
<dbReference type="jPOST" id="Q9Y2W1"/>
<dbReference type="MassIVE" id="Q9Y2W1"/>
<dbReference type="PaxDb" id="9606-ENSP00000346634"/>
<dbReference type="PeptideAtlas" id="Q9Y2W1"/>
<dbReference type="ProteomicsDB" id="85914"/>
<dbReference type="Pumba" id="Q9Y2W1"/>
<dbReference type="TopDownProteomics" id="Q9Y2W1"/>
<dbReference type="Antibodypedia" id="1852">
    <property type="antibodies" value="164 antibodies from 31 providers"/>
</dbReference>
<dbReference type="DNASU" id="9967"/>
<dbReference type="Ensembl" id="ENST00000354618.10">
    <property type="protein sequence ID" value="ENSP00000346634.5"/>
    <property type="gene ID" value="ENSG00000054118.15"/>
</dbReference>
<dbReference type="Ensembl" id="ENST00000469141.6">
    <property type="protein sequence ID" value="ENSP00000433825.1"/>
    <property type="gene ID" value="ENSG00000054118.15"/>
</dbReference>
<dbReference type="GeneID" id="9967"/>
<dbReference type="KEGG" id="hsa:9967"/>
<dbReference type="MANE-Select" id="ENST00000354618.10">
    <property type="protein sequence ID" value="ENSP00000346634.5"/>
    <property type="RefSeq nucleotide sequence ID" value="NM_005119.4"/>
    <property type="RefSeq protein sequence ID" value="NP_005110.2"/>
</dbReference>
<dbReference type="UCSC" id="uc001cae.5">
    <property type="organism name" value="human"/>
</dbReference>
<dbReference type="AGR" id="HGNC:22964"/>
<dbReference type="CTD" id="9967"/>
<dbReference type="DisGeNET" id="9967"/>
<dbReference type="GeneCards" id="THRAP3"/>
<dbReference type="HGNC" id="HGNC:22964">
    <property type="gene designation" value="THRAP3"/>
</dbReference>
<dbReference type="HPA" id="ENSG00000054118">
    <property type="expression patterns" value="Low tissue specificity"/>
</dbReference>
<dbReference type="MalaCards" id="THRAP3"/>
<dbReference type="MIM" id="603809">
    <property type="type" value="gene"/>
</dbReference>
<dbReference type="neXtProt" id="NX_Q9Y2W1"/>
<dbReference type="OpenTargets" id="ENSG00000054118"/>
<dbReference type="PharmGKB" id="PA134893249"/>
<dbReference type="VEuPathDB" id="HostDB:ENSG00000054118"/>
<dbReference type="eggNOG" id="ENOG502QR38">
    <property type="taxonomic scope" value="Eukaryota"/>
</dbReference>
<dbReference type="GeneTree" id="ENSGT00950000183163"/>
<dbReference type="HOGENOM" id="CLU_014485_1_0_1"/>
<dbReference type="InParanoid" id="Q9Y2W1"/>
<dbReference type="OMA" id="GEGTDKW"/>
<dbReference type="OrthoDB" id="9948513at2759"/>
<dbReference type="PAN-GO" id="Q9Y2W1">
    <property type="GO annotations" value="4 GO annotations based on evolutionary models"/>
</dbReference>
<dbReference type="PhylomeDB" id="Q9Y2W1"/>
<dbReference type="TreeFam" id="TF335939"/>
<dbReference type="PathwayCommons" id="Q9Y2W1"/>
<dbReference type="Reactome" id="R-HSA-1989781">
    <property type="pathway name" value="PPARA activates gene expression"/>
</dbReference>
<dbReference type="Reactome" id="R-HSA-381340">
    <property type="pathway name" value="Transcriptional regulation of white adipocyte differentiation"/>
</dbReference>
<dbReference type="SignaLink" id="Q9Y2W1"/>
<dbReference type="SIGNOR" id="Q9Y2W1"/>
<dbReference type="BioGRID-ORCS" id="9967">
    <property type="hits" value="50 hits in 1173 CRISPR screens"/>
</dbReference>
<dbReference type="CD-CODE" id="232F8A39">
    <property type="entry name" value="P-body"/>
</dbReference>
<dbReference type="CD-CODE" id="804901D1">
    <property type="entry name" value="Nuclear speckle"/>
</dbReference>
<dbReference type="ChiTaRS" id="THRAP3">
    <property type="organism name" value="human"/>
</dbReference>
<dbReference type="GeneWiki" id="THRAP3"/>
<dbReference type="GenomeRNAi" id="9967"/>
<dbReference type="Pharos" id="Q9Y2W1">
    <property type="development level" value="Tbio"/>
</dbReference>
<dbReference type="PRO" id="PR:Q9Y2W1"/>
<dbReference type="Proteomes" id="UP000005640">
    <property type="component" value="Chromosome 1"/>
</dbReference>
<dbReference type="RNAct" id="Q9Y2W1">
    <property type="molecule type" value="protein"/>
</dbReference>
<dbReference type="Bgee" id="ENSG00000054118">
    <property type="expression patterns" value="Expressed in gastrocnemius and 183 other cell types or tissues"/>
</dbReference>
<dbReference type="ExpressionAtlas" id="Q9Y2W1">
    <property type="expression patterns" value="baseline and differential"/>
</dbReference>
<dbReference type="GO" id="GO:0070062">
    <property type="term" value="C:extracellular exosome"/>
    <property type="evidence" value="ECO:0007005"/>
    <property type="project" value="UniProtKB"/>
</dbReference>
<dbReference type="GO" id="GO:0016592">
    <property type="term" value="C:mediator complex"/>
    <property type="evidence" value="ECO:0000314"/>
    <property type="project" value="UniProtKB"/>
</dbReference>
<dbReference type="GO" id="GO:0016607">
    <property type="term" value="C:nuclear speck"/>
    <property type="evidence" value="ECO:0000314"/>
    <property type="project" value="UniProtKB"/>
</dbReference>
<dbReference type="GO" id="GO:0005654">
    <property type="term" value="C:nucleoplasm"/>
    <property type="evidence" value="ECO:0000314"/>
    <property type="project" value="UniProtKB"/>
</dbReference>
<dbReference type="GO" id="GO:0005634">
    <property type="term" value="C:nucleus"/>
    <property type="evidence" value="ECO:0000314"/>
    <property type="project" value="UniProtKB"/>
</dbReference>
<dbReference type="GO" id="GO:0005524">
    <property type="term" value="F:ATP binding"/>
    <property type="evidence" value="ECO:0007669"/>
    <property type="project" value="UniProtKB-KW"/>
</dbReference>
<dbReference type="GO" id="GO:0003677">
    <property type="term" value="F:DNA binding"/>
    <property type="evidence" value="ECO:0000318"/>
    <property type="project" value="GO_Central"/>
</dbReference>
<dbReference type="GO" id="GO:0046966">
    <property type="term" value="F:nuclear thyroid hormone receptor binding"/>
    <property type="evidence" value="ECO:0000314"/>
    <property type="project" value="UniProtKB"/>
</dbReference>
<dbReference type="GO" id="GO:0042809">
    <property type="term" value="F:nuclear vitamin D receptor binding"/>
    <property type="evidence" value="ECO:0000303"/>
    <property type="project" value="UniProtKB"/>
</dbReference>
<dbReference type="GO" id="GO:0051219">
    <property type="term" value="F:phosphoprotein binding"/>
    <property type="evidence" value="ECO:0000314"/>
    <property type="project" value="UniProtKB"/>
</dbReference>
<dbReference type="GO" id="GO:0003723">
    <property type="term" value="F:RNA binding"/>
    <property type="evidence" value="ECO:0007005"/>
    <property type="project" value="UniProtKB"/>
</dbReference>
<dbReference type="GO" id="GO:0000978">
    <property type="term" value="F:RNA polymerase II cis-regulatory region sequence-specific DNA binding"/>
    <property type="evidence" value="ECO:0000250"/>
    <property type="project" value="UniProtKB"/>
</dbReference>
<dbReference type="GO" id="GO:0003713">
    <property type="term" value="F:transcription coactivator activity"/>
    <property type="evidence" value="ECO:0000314"/>
    <property type="project" value="MGI"/>
</dbReference>
<dbReference type="GO" id="GO:0003712">
    <property type="term" value="F:transcription coregulator activity"/>
    <property type="evidence" value="ECO:0000314"/>
    <property type="project" value="UniProtKB"/>
</dbReference>
<dbReference type="GO" id="GO:0007623">
    <property type="term" value="P:circadian rhythm"/>
    <property type="evidence" value="ECO:0007669"/>
    <property type="project" value="Ensembl"/>
</dbReference>
<dbReference type="GO" id="GO:0006397">
    <property type="term" value="P:mRNA processing"/>
    <property type="evidence" value="ECO:0007669"/>
    <property type="project" value="UniProtKB-KW"/>
</dbReference>
<dbReference type="GO" id="GO:0048255">
    <property type="term" value="P:mRNA stabilization"/>
    <property type="evidence" value="ECO:0000315"/>
    <property type="project" value="UniProtKB"/>
</dbReference>
<dbReference type="GO" id="GO:0000956">
    <property type="term" value="P:nuclear-transcribed mRNA catabolic process"/>
    <property type="evidence" value="ECO:0000314"/>
    <property type="project" value="UniProtKB"/>
</dbReference>
<dbReference type="GO" id="GO:0042753">
    <property type="term" value="P:positive regulation of circadian rhythm"/>
    <property type="evidence" value="ECO:0000315"/>
    <property type="project" value="UniProtKB"/>
</dbReference>
<dbReference type="GO" id="GO:0045893">
    <property type="term" value="P:positive regulation of DNA-templated transcription"/>
    <property type="evidence" value="ECO:0000314"/>
    <property type="project" value="UniProtKB"/>
</dbReference>
<dbReference type="GO" id="GO:0048026">
    <property type="term" value="P:positive regulation of mRNA splicing, via spliceosome"/>
    <property type="evidence" value="ECO:0000315"/>
    <property type="project" value="UniProtKB"/>
</dbReference>
<dbReference type="GO" id="GO:0045944">
    <property type="term" value="P:positive regulation of transcription by RNA polymerase II"/>
    <property type="evidence" value="ECO:0000314"/>
    <property type="project" value="MGI"/>
</dbReference>
<dbReference type="GO" id="GO:0000381">
    <property type="term" value="P:regulation of alternative mRNA splicing, via spliceosome"/>
    <property type="evidence" value="ECO:0000315"/>
    <property type="project" value="UniProtKB"/>
</dbReference>
<dbReference type="GO" id="GO:0008380">
    <property type="term" value="P:RNA splicing"/>
    <property type="evidence" value="ECO:0007669"/>
    <property type="project" value="UniProtKB-KW"/>
</dbReference>
<dbReference type="InterPro" id="IPR029199">
    <property type="entry name" value="THRAP3_BCLAF1"/>
</dbReference>
<dbReference type="PANTHER" id="PTHR15268">
    <property type="entry name" value="THRAP3/BCLAF1"/>
    <property type="match status" value="1"/>
</dbReference>
<dbReference type="PANTHER" id="PTHR15268:SF16">
    <property type="entry name" value="THYROID HORMONE RECEPTOR-ASSOCIATED PROTEIN 3"/>
    <property type="match status" value="1"/>
</dbReference>
<dbReference type="Pfam" id="PF15440">
    <property type="entry name" value="THRAP3_BCLAF1"/>
    <property type="match status" value="1"/>
</dbReference>
<evidence type="ECO:0000250" key="1">
    <source>
        <dbReference type="UniProtKB" id="Q569Z6"/>
    </source>
</evidence>
<evidence type="ECO:0000255" key="2"/>
<evidence type="ECO:0000256" key="3">
    <source>
        <dbReference type="SAM" id="MobiDB-lite"/>
    </source>
</evidence>
<evidence type="ECO:0000269" key="4">
    <source>
    </source>
</evidence>
<evidence type="ECO:0000269" key="5">
    <source>
    </source>
</evidence>
<evidence type="ECO:0000269" key="6">
    <source>
    </source>
</evidence>
<evidence type="ECO:0000269" key="7">
    <source>
    </source>
</evidence>
<evidence type="ECO:0000269" key="8">
    <source>
    </source>
</evidence>
<evidence type="ECO:0000269" key="9">
    <source>
    </source>
</evidence>
<evidence type="ECO:0000269" key="10">
    <source>
    </source>
</evidence>
<evidence type="ECO:0000269" key="11">
    <source>
    </source>
</evidence>
<evidence type="ECO:0000269" key="12">
    <source>
    </source>
</evidence>
<evidence type="ECO:0000269" key="13">
    <source>
    </source>
</evidence>
<evidence type="ECO:0000269" key="14">
    <source ref="3"/>
</evidence>
<evidence type="ECO:0000269" key="15">
    <source ref="5"/>
</evidence>
<evidence type="ECO:0000305" key="16"/>
<evidence type="ECO:0000312" key="17">
    <source>
        <dbReference type="HGNC" id="HGNC:22964"/>
    </source>
</evidence>
<evidence type="ECO:0007744" key="18">
    <source>
    </source>
</evidence>
<evidence type="ECO:0007744" key="19">
    <source>
    </source>
</evidence>
<evidence type="ECO:0007744" key="20">
    <source>
    </source>
</evidence>
<evidence type="ECO:0007744" key="21">
    <source>
    </source>
</evidence>
<evidence type="ECO:0007744" key="22">
    <source>
    </source>
</evidence>
<evidence type="ECO:0007744" key="23">
    <source>
    </source>
</evidence>
<evidence type="ECO:0007744" key="24">
    <source>
    </source>
</evidence>
<evidence type="ECO:0007744" key="25">
    <source>
    </source>
</evidence>
<evidence type="ECO:0007744" key="26">
    <source>
    </source>
</evidence>
<evidence type="ECO:0007744" key="27">
    <source>
    </source>
</evidence>
<evidence type="ECO:0007744" key="28">
    <source>
    </source>
</evidence>
<evidence type="ECO:0007744" key="29">
    <source>
    </source>
</evidence>
<evidence type="ECO:0007744" key="30">
    <source>
    </source>
</evidence>
<evidence type="ECO:0007744" key="31">
    <source>
    </source>
</evidence>
<evidence type="ECO:0007744" key="32">
    <source>
    </source>
</evidence>
<evidence type="ECO:0007744" key="33">
    <source>
    </source>
</evidence>
<evidence type="ECO:0007744" key="34">
    <source>
    </source>
</evidence>
<evidence type="ECO:0007744" key="35">
    <source>
    </source>
</evidence>
<evidence type="ECO:0007744" key="36">
    <source>
    </source>
</evidence>
<evidence type="ECO:0007744" key="37">
    <source>
    </source>
</evidence>